<comment type="function">
    <text evidence="1">Specific, proton motive force-dependent high-affinity transporter for xanthine.</text>
</comment>
<comment type="catalytic activity">
    <reaction evidence="1">
        <text>xanthine(in) + H(+)(in) = xanthine(out) + H(+)(out)</text>
        <dbReference type="Rhea" id="RHEA:29663"/>
        <dbReference type="ChEBI" id="CHEBI:15378"/>
        <dbReference type="ChEBI" id="CHEBI:17712"/>
    </reaction>
</comment>
<comment type="subcellular location">
    <subcellularLocation>
        <location evidence="1">Cell inner membrane</location>
        <topology evidence="2">Multi-pass membrane protein</topology>
    </subcellularLocation>
</comment>
<comment type="similarity">
    <text evidence="3">Belongs to the nucleobase:cation symporter-2 (NCS2) (TC 2.A.40) family.</text>
</comment>
<protein>
    <recommendedName>
        <fullName evidence="1">Xanthine permease XanP</fullName>
    </recommendedName>
</protein>
<reference key="1">
    <citation type="journal article" date="2002" name="Nucleic Acids Res.">
        <title>Genome sequence of Shigella flexneri 2a: insights into pathogenicity through comparison with genomes of Escherichia coli K12 and O157.</title>
        <authorList>
            <person name="Jin Q."/>
            <person name="Yuan Z."/>
            <person name="Xu J."/>
            <person name="Wang Y."/>
            <person name="Shen Y."/>
            <person name="Lu W."/>
            <person name="Wang J."/>
            <person name="Liu H."/>
            <person name="Yang J."/>
            <person name="Yang F."/>
            <person name="Zhang X."/>
            <person name="Zhang J."/>
            <person name="Yang G."/>
            <person name="Wu H."/>
            <person name="Qu D."/>
            <person name="Dong J."/>
            <person name="Sun L."/>
            <person name="Xue Y."/>
            <person name="Zhao A."/>
            <person name="Gao Y."/>
            <person name="Zhu J."/>
            <person name="Kan B."/>
            <person name="Ding K."/>
            <person name="Chen S."/>
            <person name="Cheng H."/>
            <person name="Yao Z."/>
            <person name="He B."/>
            <person name="Chen R."/>
            <person name="Ma D."/>
            <person name="Qiang B."/>
            <person name="Wen Y."/>
            <person name="Hou Y."/>
            <person name="Yu J."/>
        </authorList>
    </citation>
    <scope>NUCLEOTIDE SEQUENCE [LARGE SCALE GENOMIC DNA]</scope>
    <source>
        <strain>301 / Serotype 2a</strain>
    </source>
</reference>
<reference key="2">
    <citation type="journal article" date="2003" name="Infect. Immun.">
        <title>Complete genome sequence and comparative genomics of Shigella flexneri serotype 2a strain 2457T.</title>
        <authorList>
            <person name="Wei J."/>
            <person name="Goldberg M.B."/>
            <person name="Burland V."/>
            <person name="Venkatesan M.M."/>
            <person name="Deng W."/>
            <person name="Fournier G."/>
            <person name="Mayhew G.F."/>
            <person name="Plunkett G. III"/>
            <person name="Rose D.J."/>
            <person name="Darling A."/>
            <person name="Mau B."/>
            <person name="Perna N.T."/>
            <person name="Payne S.M."/>
            <person name="Runyen-Janecky L.J."/>
            <person name="Zhou S."/>
            <person name="Schwartz D.C."/>
            <person name="Blattner F.R."/>
        </authorList>
    </citation>
    <scope>NUCLEOTIDE SEQUENCE [LARGE SCALE GENOMIC DNA]</scope>
    <source>
        <strain>ATCC 700930 / 2457T / Serotype 2a</strain>
    </source>
</reference>
<dbReference type="EMBL" id="AE005674">
    <property type="protein sequence ID" value="AAN45141.2"/>
    <property type="molecule type" value="Genomic_DNA"/>
</dbReference>
<dbReference type="EMBL" id="AE014073">
    <property type="protein sequence ID" value="AAP19052.1"/>
    <property type="molecule type" value="Genomic_DNA"/>
</dbReference>
<dbReference type="RefSeq" id="WP_001295238.1">
    <property type="nucleotide sequence ID" value="NZ_WPGW01000042.1"/>
</dbReference>
<dbReference type="SMR" id="P0AGN2"/>
<dbReference type="STRING" id="198214.SF3694"/>
<dbReference type="PaxDb" id="198214-SF3694"/>
<dbReference type="GeneID" id="93778369"/>
<dbReference type="KEGG" id="sfl:SF3694"/>
<dbReference type="KEGG" id="sfx:S4075"/>
<dbReference type="PATRIC" id="fig|198214.7.peg.4358"/>
<dbReference type="HOGENOM" id="CLU_017959_8_0_6"/>
<dbReference type="Proteomes" id="UP000001006">
    <property type="component" value="Chromosome"/>
</dbReference>
<dbReference type="Proteomes" id="UP000002673">
    <property type="component" value="Chromosome"/>
</dbReference>
<dbReference type="GO" id="GO:0005886">
    <property type="term" value="C:plasma membrane"/>
    <property type="evidence" value="ECO:0007669"/>
    <property type="project" value="UniProtKB-SubCell"/>
</dbReference>
<dbReference type="GO" id="GO:0042907">
    <property type="term" value="F:xanthine transmembrane transporter activity"/>
    <property type="evidence" value="ECO:0007669"/>
    <property type="project" value="TreeGrafter"/>
</dbReference>
<dbReference type="InterPro" id="IPR006043">
    <property type="entry name" value="NCS2"/>
</dbReference>
<dbReference type="InterPro" id="IPR006042">
    <property type="entry name" value="Xan_ur_permease"/>
</dbReference>
<dbReference type="NCBIfam" id="TIGR00801">
    <property type="entry name" value="ncs2"/>
    <property type="match status" value="1"/>
</dbReference>
<dbReference type="NCBIfam" id="NF037981">
    <property type="entry name" value="NCS2_1"/>
    <property type="match status" value="1"/>
</dbReference>
<dbReference type="PANTHER" id="PTHR42810">
    <property type="entry name" value="PURINE PERMEASE C1399.01C-RELATED"/>
    <property type="match status" value="1"/>
</dbReference>
<dbReference type="PANTHER" id="PTHR42810:SF2">
    <property type="entry name" value="PURINE PERMEASE C1399.01C-RELATED"/>
    <property type="match status" value="1"/>
</dbReference>
<dbReference type="Pfam" id="PF00860">
    <property type="entry name" value="Xan_ur_permease"/>
    <property type="match status" value="1"/>
</dbReference>
<dbReference type="PROSITE" id="PS01116">
    <property type="entry name" value="XANTH_URACIL_PERMASE"/>
    <property type="match status" value="1"/>
</dbReference>
<proteinExistence type="inferred from homology"/>
<name>XANP_SHIFL</name>
<keyword id="KW-0997">Cell inner membrane</keyword>
<keyword id="KW-1003">Cell membrane</keyword>
<keyword id="KW-0472">Membrane</keyword>
<keyword id="KW-1185">Reference proteome</keyword>
<keyword id="KW-0812">Transmembrane</keyword>
<keyword id="KW-1133">Transmembrane helix</keyword>
<keyword id="KW-0813">Transport</keyword>
<sequence>MSVSTLESENAQPVAQTQNSELIYRLEDRPPLPQTLFAACQHLLAMFVAVITPALLICQALGLPAQDTQHIISMSLFASGVASIIQIKAWGPVGSGLLSIQGTSFNFVAPLIMGGTALKTGGADVPTMMAALFGTLMLASCTEMVISRVLHLARRIITPLVSGVVVMIIGLSLIQVGLTSIGGGYAAMSDNTFGAPKNLLLAGVVLALIILLNRQRNPYLRVASLVIAMAAGYALAWFMGMLPESNEPMTQELIMVPTPLYYGLGIEWSLLLPLMLVFMITSLETIGDITATSDVSEQPVSGPLYMKRLKGGVLANGLNSFVSAVFNTFPNSCFGQNNGVIQLTGVASRYVGFVVALMLIVLGLFPAVSGFVQHIPEPVLGGATLVMFGTIAASGVRIVSREPLNRRAILIIALSLAVGLGVSQQPLILQFAPEWLKNLLSSGIAAGGITAIVLNLIFPPEKQ</sequence>
<feature type="chain" id="PRO_0000165972" description="Xanthine permease XanP">
    <location>
        <begin position="1"/>
        <end position="463"/>
    </location>
</feature>
<feature type="transmembrane region" description="Helical" evidence="2">
    <location>
        <begin position="43"/>
        <end position="63"/>
    </location>
</feature>
<feature type="transmembrane region" description="Helical" evidence="2">
    <location>
        <begin position="71"/>
        <end position="91"/>
    </location>
</feature>
<feature type="transmembrane region" description="Helical" evidence="2">
    <location>
        <begin position="93"/>
        <end position="113"/>
    </location>
</feature>
<feature type="transmembrane region" description="Helical" evidence="2">
    <location>
        <begin position="126"/>
        <end position="146"/>
    </location>
</feature>
<feature type="transmembrane region" description="Helical" evidence="2">
    <location>
        <begin position="156"/>
        <end position="176"/>
    </location>
</feature>
<feature type="transmembrane region" description="Helical" evidence="2">
    <location>
        <begin position="192"/>
        <end position="212"/>
    </location>
</feature>
<feature type="transmembrane region" description="Helical" evidence="2">
    <location>
        <begin position="222"/>
        <end position="242"/>
    </location>
</feature>
<feature type="transmembrane region" description="Helical" evidence="2">
    <location>
        <begin position="260"/>
        <end position="280"/>
    </location>
</feature>
<feature type="transmembrane region" description="Helical" evidence="2">
    <location>
        <begin position="352"/>
        <end position="372"/>
    </location>
</feature>
<feature type="transmembrane region" description="Helical" evidence="2">
    <location>
        <begin position="379"/>
        <end position="399"/>
    </location>
</feature>
<feature type="transmembrane region" description="Helical" evidence="2">
    <location>
        <begin position="409"/>
        <end position="429"/>
    </location>
</feature>
<feature type="transmembrane region" description="Helical" evidence="2">
    <location>
        <begin position="439"/>
        <end position="459"/>
    </location>
</feature>
<organism>
    <name type="scientific">Shigella flexneri</name>
    <dbReference type="NCBI Taxonomy" id="623"/>
    <lineage>
        <taxon>Bacteria</taxon>
        <taxon>Pseudomonadati</taxon>
        <taxon>Pseudomonadota</taxon>
        <taxon>Gammaproteobacteria</taxon>
        <taxon>Enterobacterales</taxon>
        <taxon>Enterobacteriaceae</taxon>
        <taxon>Shigella</taxon>
    </lineage>
</organism>
<gene>
    <name type="primary">xanP</name>
    <name type="ordered locus">SF3694</name>
    <name type="ordered locus">S4075</name>
</gene>
<evidence type="ECO:0000250" key="1">
    <source>
        <dbReference type="UniProtKB" id="P0AGM9"/>
    </source>
</evidence>
<evidence type="ECO:0000255" key="2"/>
<evidence type="ECO:0000305" key="3"/>
<accession>P0AGN2</accession>
<accession>P27432</accession>